<keyword id="KW-0963">Cytoplasm</keyword>
<keyword id="KW-0694">RNA-binding</keyword>
<dbReference type="EMBL" id="CP000970">
    <property type="protein sequence ID" value="ACB15492.1"/>
    <property type="molecule type" value="Genomic_DNA"/>
</dbReference>
<dbReference type="RefSeq" id="WP_000162574.1">
    <property type="nucleotide sequence ID" value="NC_010498.1"/>
</dbReference>
<dbReference type="SMR" id="B1LPC7"/>
<dbReference type="GeneID" id="93774470"/>
<dbReference type="KEGG" id="ecm:EcSMS35_2772"/>
<dbReference type="HOGENOM" id="CLU_108953_3_0_6"/>
<dbReference type="Proteomes" id="UP000007011">
    <property type="component" value="Chromosome"/>
</dbReference>
<dbReference type="GO" id="GO:0005829">
    <property type="term" value="C:cytosol"/>
    <property type="evidence" value="ECO:0007669"/>
    <property type="project" value="TreeGrafter"/>
</dbReference>
<dbReference type="GO" id="GO:0003723">
    <property type="term" value="F:RNA binding"/>
    <property type="evidence" value="ECO:0007669"/>
    <property type="project" value="UniProtKB-UniRule"/>
</dbReference>
<dbReference type="GO" id="GO:0070929">
    <property type="term" value="P:trans-translation"/>
    <property type="evidence" value="ECO:0007669"/>
    <property type="project" value="UniProtKB-UniRule"/>
</dbReference>
<dbReference type="CDD" id="cd09294">
    <property type="entry name" value="SmpB"/>
    <property type="match status" value="1"/>
</dbReference>
<dbReference type="FunFam" id="2.40.280.10:FF:000001">
    <property type="entry name" value="SsrA-binding protein"/>
    <property type="match status" value="1"/>
</dbReference>
<dbReference type="Gene3D" id="2.40.280.10">
    <property type="match status" value="1"/>
</dbReference>
<dbReference type="HAMAP" id="MF_00023">
    <property type="entry name" value="SmpB"/>
    <property type="match status" value="1"/>
</dbReference>
<dbReference type="InterPro" id="IPR023620">
    <property type="entry name" value="SmpB"/>
</dbReference>
<dbReference type="InterPro" id="IPR000037">
    <property type="entry name" value="SsrA-bd_prot"/>
</dbReference>
<dbReference type="InterPro" id="IPR020081">
    <property type="entry name" value="SsrA-bd_prot_CS"/>
</dbReference>
<dbReference type="NCBIfam" id="NF003843">
    <property type="entry name" value="PRK05422.1"/>
    <property type="match status" value="1"/>
</dbReference>
<dbReference type="NCBIfam" id="TIGR00086">
    <property type="entry name" value="smpB"/>
    <property type="match status" value="1"/>
</dbReference>
<dbReference type="PANTHER" id="PTHR30308:SF2">
    <property type="entry name" value="SSRA-BINDING PROTEIN"/>
    <property type="match status" value="1"/>
</dbReference>
<dbReference type="PANTHER" id="PTHR30308">
    <property type="entry name" value="TMRNA-BINDING COMPONENT OF TRANS-TRANSLATION TAGGING COMPLEX"/>
    <property type="match status" value="1"/>
</dbReference>
<dbReference type="Pfam" id="PF01668">
    <property type="entry name" value="SmpB"/>
    <property type="match status" value="1"/>
</dbReference>
<dbReference type="SUPFAM" id="SSF74982">
    <property type="entry name" value="Small protein B (SmpB)"/>
    <property type="match status" value="1"/>
</dbReference>
<dbReference type="PROSITE" id="PS01317">
    <property type="entry name" value="SSRP"/>
    <property type="match status" value="1"/>
</dbReference>
<proteinExistence type="inferred from homology"/>
<protein>
    <recommendedName>
        <fullName evidence="1">SsrA-binding protein</fullName>
    </recommendedName>
    <alternativeName>
        <fullName evidence="1">Small protein B</fullName>
    </alternativeName>
</protein>
<organism>
    <name type="scientific">Escherichia coli (strain SMS-3-5 / SECEC)</name>
    <dbReference type="NCBI Taxonomy" id="439855"/>
    <lineage>
        <taxon>Bacteria</taxon>
        <taxon>Pseudomonadati</taxon>
        <taxon>Pseudomonadota</taxon>
        <taxon>Gammaproteobacteria</taxon>
        <taxon>Enterobacterales</taxon>
        <taxon>Enterobacteriaceae</taxon>
        <taxon>Escherichia</taxon>
    </lineage>
</organism>
<sequence>MTKKKAHKPGSATIALNKRARHEYFIEEEFEAGLALQGWEVKSLRAGKANISDSYVLLRDGEAFLFGANITPMAVASTHVVCDPTRTRKLLLNQRELDSLYGRVNREGYTVVALSLYWKNAWCKVKIGVAKGKKQHDKRSDIKEREWQVDKARIMKNAHR</sequence>
<gene>
    <name evidence="1" type="primary">smpB</name>
    <name type="ordered locus">EcSMS35_2772</name>
</gene>
<reference key="1">
    <citation type="journal article" date="2008" name="J. Bacteriol.">
        <title>Insights into the environmental resistance gene pool from the genome sequence of the multidrug-resistant environmental isolate Escherichia coli SMS-3-5.</title>
        <authorList>
            <person name="Fricke W.F."/>
            <person name="Wright M.S."/>
            <person name="Lindell A.H."/>
            <person name="Harkins D.M."/>
            <person name="Baker-Austin C."/>
            <person name="Ravel J."/>
            <person name="Stepanauskas R."/>
        </authorList>
    </citation>
    <scope>NUCLEOTIDE SEQUENCE [LARGE SCALE GENOMIC DNA]</scope>
    <source>
        <strain>SMS-3-5 / SECEC</strain>
    </source>
</reference>
<feature type="chain" id="PRO_1000116423" description="SsrA-binding protein">
    <location>
        <begin position="1"/>
        <end position="160"/>
    </location>
</feature>
<name>SSRP_ECOSM</name>
<accession>B1LPC7</accession>
<comment type="function">
    <text evidence="1">Required for rescue of stalled ribosomes mediated by trans-translation. Binds to transfer-messenger RNA (tmRNA), required for stable association of tmRNA with ribosomes. tmRNA and SmpB together mimic tRNA shape, replacing the anticodon stem-loop with SmpB. tmRNA is encoded by the ssrA gene; the 2 termini fold to resemble tRNA(Ala) and it encodes a 'tag peptide', a short internal open reading frame. During trans-translation Ala-aminoacylated tmRNA acts like a tRNA, entering the A-site of stalled ribosomes, displacing the stalled mRNA. The ribosome then switches to translate the ORF on the tmRNA; the nascent peptide is terminated with the 'tag peptide' encoded by the tmRNA and targeted for degradation. The ribosome is freed to recommence translation, which seems to be the essential function of trans-translation.</text>
</comment>
<comment type="subcellular location">
    <subcellularLocation>
        <location evidence="1">Cytoplasm</location>
    </subcellularLocation>
    <text evidence="1">The tmRNA-SmpB complex associates with stalled 70S ribosomes.</text>
</comment>
<comment type="similarity">
    <text evidence="1">Belongs to the SmpB family.</text>
</comment>
<evidence type="ECO:0000255" key="1">
    <source>
        <dbReference type="HAMAP-Rule" id="MF_00023"/>
    </source>
</evidence>